<reference key="1">
    <citation type="journal article" date="2006" name="J. Bacteriol.">
        <title>Chromosome rearrangement and diversification of Francisella tularensis revealed by the type B (OSU18) genome sequence.</title>
        <authorList>
            <person name="Petrosino J.F."/>
            <person name="Xiang Q."/>
            <person name="Karpathy S.E."/>
            <person name="Jiang H."/>
            <person name="Yerrapragada S."/>
            <person name="Liu Y."/>
            <person name="Gioia J."/>
            <person name="Hemphill L."/>
            <person name="Gonzalez A."/>
            <person name="Raghavan T.M."/>
            <person name="Uzman A."/>
            <person name="Fox G.E."/>
            <person name="Highlander S."/>
            <person name="Reichard M."/>
            <person name="Morton R.J."/>
            <person name="Clinkenbeard K.D."/>
            <person name="Weinstock G.M."/>
        </authorList>
    </citation>
    <scope>NUCLEOTIDE SEQUENCE [LARGE SCALE GENOMIC DNA]</scope>
    <source>
        <strain>OSU18</strain>
    </source>
</reference>
<protein>
    <recommendedName>
        <fullName evidence="1">Oligoribonuclease</fullName>
        <ecNumber evidence="1">3.1.15.-</ecNumber>
    </recommendedName>
</protein>
<sequence length="178" mass="20683">MQSADNLIWIDLEMTGLDVDSCKIIEIAAIITDKDLNIIAEAEPIAIYQPDEVLANMNEWCIKTHTETGLTQRVKDSKISTEAAEQQILEFIRKFVPYQSSPLCGNSIWQDRRFLAKYMPNIDEYCHYRMLDVTTLKLLNQYWGDGKSFEKKNTHKALDDIRESIAELKFYRQELLSI</sequence>
<name>ORN_FRATO</name>
<gene>
    <name evidence="1" type="primary">orn</name>
    <name type="ordered locus">FTH_0177</name>
</gene>
<keyword id="KW-0963">Cytoplasm</keyword>
<keyword id="KW-0269">Exonuclease</keyword>
<keyword id="KW-0378">Hydrolase</keyword>
<keyword id="KW-0540">Nuclease</keyword>
<proteinExistence type="inferred from homology"/>
<organism>
    <name type="scientific">Francisella tularensis subsp. holarctica (strain OSU18)</name>
    <dbReference type="NCBI Taxonomy" id="393011"/>
    <lineage>
        <taxon>Bacteria</taxon>
        <taxon>Pseudomonadati</taxon>
        <taxon>Pseudomonadota</taxon>
        <taxon>Gammaproteobacteria</taxon>
        <taxon>Thiotrichales</taxon>
        <taxon>Francisellaceae</taxon>
        <taxon>Francisella</taxon>
    </lineage>
</organism>
<accession>Q0BNX6</accession>
<evidence type="ECO:0000255" key="1">
    <source>
        <dbReference type="HAMAP-Rule" id="MF_00045"/>
    </source>
</evidence>
<comment type="function">
    <text evidence="1">3'-to-5' exoribonuclease specific for small oligoribonucleotides.</text>
</comment>
<comment type="subcellular location">
    <subcellularLocation>
        <location evidence="1">Cytoplasm</location>
    </subcellularLocation>
</comment>
<comment type="similarity">
    <text evidence="1">Belongs to the oligoribonuclease family.</text>
</comment>
<feature type="chain" id="PRO_1000004251" description="Oligoribonuclease">
    <location>
        <begin position="1"/>
        <end position="178"/>
    </location>
</feature>
<feature type="domain" description="Exonuclease" evidence="1">
    <location>
        <begin position="7"/>
        <end position="168"/>
    </location>
</feature>
<feature type="active site" evidence="1">
    <location>
        <position position="128"/>
    </location>
</feature>
<dbReference type="EC" id="3.1.15.-" evidence="1"/>
<dbReference type="EMBL" id="CP000437">
    <property type="protein sequence ID" value="ABI82208.1"/>
    <property type="molecule type" value="Genomic_DNA"/>
</dbReference>
<dbReference type="RefSeq" id="WP_011648563.1">
    <property type="nucleotide sequence ID" value="NC_017463.1"/>
</dbReference>
<dbReference type="SMR" id="Q0BNX6"/>
<dbReference type="KEGG" id="fth:FTH_0177"/>
<dbReference type="GO" id="GO:0005737">
    <property type="term" value="C:cytoplasm"/>
    <property type="evidence" value="ECO:0007669"/>
    <property type="project" value="UniProtKB-SubCell"/>
</dbReference>
<dbReference type="GO" id="GO:0000175">
    <property type="term" value="F:3'-5'-RNA exonuclease activity"/>
    <property type="evidence" value="ECO:0007669"/>
    <property type="project" value="InterPro"/>
</dbReference>
<dbReference type="GO" id="GO:0003676">
    <property type="term" value="F:nucleic acid binding"/>
    <property type="evidence" value="ECO:0007669"/>
    <property type="project" value="InterPro"/>
</dbReference>
<dbReference type="GO" id="GO:0006259">
    <property type="term" value="P:DNA metabolic process"/>
    <property type="evidence" value="ECO:0007669"/>
    <property type="project" value="UniProtKB-ARBA"/>
</dbReference>
<dbReference type="CDD" id="cd06135">
    <property type="entry name" value="Orn"/>
    <property type="match status" value="1"/>
</dbReference>
<dbReference type="FunFam" id="3.30.420.10:FF:000003">
    <property type="entry name" value="Oligoribonuclease"/>
    <property type="match status" value="1"/>
</dbReference>
<dbReference type="Gene3D" id="3.30.420.10">
    <property type="entry name" value="Ribonuclease H-like superfamily/Ribonuclease H"/>
    <property type="match status" value="1"/>
</dbReference>
<dbReference type="HAMAP" id="MF_00045">
    <property type="entry name" value="Oligoribonuclease"/>
    <property type="match status" value="1"/>
</dbReference>
<dbReference type="InterPro" id="IPR013520">
    <property type="entry name" value="Exonuclease_RNaseT/DNA_pol3"/>
</dbReference>
<dbReference type="InterPro" id="IPR022894">
    <property type="entry name" value="Oligoribonuclease"/>
</dbReference>
<dbReference type="InterPro" id="IPR012337">
    <property type="entry name" value="RNaseH-like_sf"/>
</dbReference>
<dbReference type="InterPro" id="IPR036397">
    <property type="entry name" value="RNaseH_sf"/>
</dbReference>
<dbReference type="NCBIfam" id="NF003765">
    <property type="entry name" value="PRK05359.1"/>
    <property type="match status" value="1"/>
</dbReference>
<dbReference type="PANTHER" id="PTHR11046">
    <property type="entry name" value="OLIGORIBONUCLEASE, MITOCHONDRIAL"/>
    <property type="match status" value="1"/>
</dbReference>
<dbReference type="PANTHER" id="PTHR11046:SF0">
    <property type="entry name" value="OLIGORIBONUCLEASE, MITOCHONDRIAL"/>
    <property type="match status" value="1"/>
</dbReference>
<dbReference type="Pfam" id="PF00929">
    <property type="entry name" value="RNase_T"/>
    <property type="match status" value="1"/>
</dbReference>
<dbReference type="SMART" id="SM00479">
    <property type="entry name" value="EXOIII"/>
    <property type="match status" value="1"/>
</dbReference>
<dbReference type="SUPFAM" id="SSF53098">
    <property type="entry name" value="Ribonuclease H-like"/>
    <property type="match status" value="1"/>
</dbReference>